<reference key="1">
    <citation type="submission" date="2006-09" db="EMBL/GenBank/DDBJ databases">
        <title>Complete sequence of Rhodopseudomonas palustris BisA53.</title>
        <authorList>
            <consortium name="US DOE Joint Genome Institute"/>
            <person name="Copeland A."/>
            <person name="Lucas S."/>
            <person name="Lapidus A."/>
            <person name="Barry K."/>
            <person name="Detter J.C."/>
            <person name="Glavina del Rio T."/>
            <person name="Hammon N."/>
            <person name="Israni S."/>
            <person name="Dalin E."/>
            <person name="Tice H."/>
            <person name="Pitluck S."/>
            <person name="Chain P."/>
            <person name="Malfatti S."/>
            <person name="Shin M."/>
            <person name="Vergez L."/>
            <person name="Schmutz J."/>
            <person name="Larimer F."/>
            <person name="Land M."/>
            <person name="Hauser L."/>
            <person name="Pelletier D.A."/>
            <person name="Kyrpides N."/>
            <person name="Kim E."/>
            <person name="Harwood C.S."/>
            <person name="Oda Y."/>
            <person name="Richardson P."/>
        </authorList>
    </citation>
    <scope>NUCLEOTIDE SEQUENCE [LARGE SCALE GENOMIC DNA]</scope>
    <source>
        <strain>BisA53</strain>
    </source>
</reference>
<organism>
    <name type="scientific">Rhodopseudomonas palustris (strain BisA53)</name>
    <dbReference type="NCBI Taxonomy" id="316055"/>
    <lineage>
        <taxon>Bacteria</taxon>
        <taxon>Pseudomonadati</taxon>
        <taxon>Pseudomonadota</taxon>
        <taxon>Alphaproteobacteria</taxon>
        <taxon>Hyphomicrobiales</taxon>
        <taxon>Nitrobacteraceae</taxon>
        <taxon>Rhodopseudomonas</taxon>
    </lineage>
</organism>
<proteinExistence type="inferred from homology"/>
<name>SECB_RHOP5</name>
<accession>Q07UP9</accession>
<protein>
    <recommendedName>
        <fullName evidence="1">Protein-export protein SecB</fullName>
    </recommendedName>
</protein>
<gene>
    <name evidence="1" type="primary">secB</name>
    <name type="ordered locus">RPE_0376</name>
</gene>
<sequence length="161" mass="17472">MTNGNGTPPEAAPPPQLNVLAQYTKDLSFENPNAPASLAPQPQQPAINIQINVGAKALAENEYEVTLSIEGKAEGASSLIFSFELQYAGVFRIVNVPQENLHPLVMIECPRLLFPFAREIIATAVRDGGFPPLMLDPVDFVGLYRQNMDRQAAEAQQASPN</sequence>
<comment type="function">
    <text evidence="1">One of the proteins required for the normal export of preproteins out of the cell cytoplasm. It is a molecular chaperone that binds to a subset of precursor proteins, maintaining them in a translocation-competent state. It also specifically binds to its receptor SecA.</text>
</comment>
<comment type="subunit">
    <text evidence="1">Homotetramer, a dimer of dimers. One homotetramer interacts with 1 SecA dimer.</text>
</comment>
<comment type="subcellular location">
    <subcellularLocation>
        <location evidence="1">Cytoplasm</location>
    </subcellularLocation>
</comment>
<comment type="similarity">
    <text evidence="1">Belongs to the SecB family.</text>
</comment>
<dbReference type="EMBL" id="CP000463">
    <property type="protein sequence ID" value="ABJ04335.1"/>
    <property type="molecule type" value="Genomic_DNA"/>
</dbReference>
<dbReference type="SMR" id="Q07UP9"/>
<dbReference type="STRING" id="316055.RPE_0376"/>
<dbReference type="KEGG" id="rpe:RPE_0376"/>
<dbReference type="eggNOG" id="COG1952">
    <property type="taxonomic scope" value="Bacteria"/>
</dbReference>
<dbReference type="HOGENOM" id="CLU_111574_0_0_5"/>
<dbReference type="OrthoDB" id="9795145at2"/>
<dbReference type="GO" id="GO:0005737">
    <property type="term" value="C:cytoplasm"/>
    <property type="evidence" value="ECO:0007669"/>
    <property type="project" value="UniProtKB-SubCell"/>
</dbReference>
<dbReference type="GO" id="GO:0051082">
    <property type="term" value="F:unfolded protein binding"/>
    <property type="evidence" value="ECO:0007669"/>
    <property type="project" value="InterPro"/>
</dbReference>
<dbReference type="GO" id="GO:0006457">
    <property type="term" value="P:protein folding"/>
    <property type="evidence" value="ECO:0007669"/>
    <property type="project" value="UniProtKB-UniRule"/>
</dbReference>
<dbReference type="GO" id="GO:0051262">
    <property type="term" value="P:protein tetramerization"/>
    <property type="evidence" value="ECO:0007669"/>
    <property type="project" value="InterPro"/>
</dbReference>
<dbReference type="GO" id="GO:0015031">
    <property type="term" value="P:protein transport"/>
    <property type="evidence" value="ECO:0007669"/>
    <property type="project" value="UniProtKB-UniRule"/>
</dbReference>
<dbReference type="Gene3D" id="3.10.420.10">
    <property type="entry name" value="SecB-like"/>
    <property type="match status" value="1"/>
</dbReference>
<dbReference type="HAMAP" id="MF_00821">
    <property type="entry name" value="SecB"/>
    <property type="match status" value="1"/>
</dbReference>
<dbReference type="InterPro" id="IPR003708">
    <property type="entry name" value="SecB"/>
</dbReference>
<dbReference type="InterPro" id="IPR035958">
    <property type="entry name" value="SecB-like_sf"/>
</dbReference>
<dbReference type="NCBIfam" id="NF004392">
    <property type="entry name" value="PRK05751.1-3"/>
    <property type="match status" value="1"/>
</dbReference>
<dbReference type="NCBIfam" id="TIGR00809">
    <property type="entry name" value="secB"/>
    <property type="match status" value="1"/>
</dbReference>
<dbReference type="PANTHER" id="PTHR36918">
    <property type="match status" value="1"/>
</dbReference>
<dbReference type="PANTHER" id="PTHR36918:SF1">
    <property type="entry name" value="PROTEIN-EXPORT PROTEIN SECB"/>
    <property type="match status" value="1"/>
</dbReference>
<dbReference type="Pfam" id="PF02556">
    <property type="entry name" value="SecB"/>
    <property type="match status" value="1"/>
</dbReference>
<dbReference type="PRINTS" id="PR01594">
    <property type="entry name" value="SECBCHAPRONE"/>
</dbReference>
<dbReference type="SUPFAM" id="SSF54611">
    <property type="entry name" value="SecB-like"/>
    <property type="match status" value="1"/>
</dbReference>
<feature type="chain" id="PRO_1000062505" description="Protein-export protein SecB">
    <location>
        <begin position="1"/>
        <end position="161"/>
    </location>
</feature>
<evidence type="ECO:0000255" key="1">
    <source>
        <dbReference type="HAMAP-Rule" id="MF_00821"/>
    </source>
</evidence>
<keyword id="KW-0143">Chaperone</keyword>
<keyword id="KW-0963">Cytoplasm</keyword>
<keyword id="KW-0653">Protein transport</keyword>
<keyword id="KW-0811">Translocation</keyword>
<keyword id="KW-0813">Transport</keyword>